<gene>
    <name evidence="1" type="primary">aroQ</name>
    <name type="ordered locus">A1S_2009</name>
</gene>
<dbReference type="EC" id="4.2.1.10" evidence="1"/>
<dbReference type="EMBL" id="CP000521">
    <property type="protein sequence ID" value="ABO12436.2"/>
    <property type="molecule type" value="Genomic_DNA"/>
</dbReference>
<dbReference type="RefSeq" id="WP_000099415.1">
    <property type="nucleotide sequence ID" value="NZ_CP053098.1"/>
</dbReference>
<dbReference type="PDB" id="4RC9">
    <property type="method" value="X-ray"/>
    <property type="resolution" value="2.05 A"/>
    <property type="chains" value="A/B/C/D/E/F/G/H/I/J/K/L=1-151"/>
</dbReference>
<dbReference type="PDB" id="4RHC">
    <property type="method" value="X-ray"/>
    <property type="resolution" value="2.68 A"/>
    <property type="chains" value="A/B/C/D/E/F/G/H/I/J/K/L=2-151"/>
</dbReference>
<dbReference type="PDB" id="4ZC1">
    <property type="method" value="X-ray"/>
    <property type="resolution" value="2.52 A"/>
    <property type="chains" value="A/B/C/D/E/F/G/H/I/J/K/L=1-146"/>
</dbReference>
<dbReference type="PDB" id="5B6P">
    <property type="method" value="X-ray"/>
    <property type="resolution" value="2.00 A"/>
    <property type="chains" value="A/B/C/D/E/F/G/H/I/J/K/L=1-151"/>
</dbReference>
<dbReference type="PDB" id="5WRF">
    <property type="method" value="X-ray"/>
    <property type="resolution" value="2.51 A"/>
    <property type="chains" value="A/B/C/D/E/F/G/H/I/J/K/L=2-146"/>
</dbReference>
<dbReference type="PDB" id="5X47">
    <property type="method" value="X-ray"/>
    <property type="resolution" value="2.54 A"/>
    <property type="chains" value="A/B/C/D/E/F/G/H/I/J/K/L=2-146"/>
</dbReference>
<dbReference type="PDB" id="5YDB">
    <property type="method" value="X-ray"/>
    <property type="resolution" value="1.76 A"/>
    <property type="chains" value="A/B/C/D=3-150"/>
</dbReference>
<dbReference type="PDB" id="5YHM">
    <property type="method" value="X-ray"/>
    <property type="resolution" value="1.91 A"/>
    <property type="chains" value="A/B/C/D/E/F/G/H/I/J/K/L=3-147"/>
</dbReference>
<dbReference type="PDB" id="5YL5">
    <property type="method" value="X-ray"/>
    <property type="resolution" value="1.90 A"/>
    <property type="chains" value="A/B/C/D/E/F/G/H/I/J/K/L=1-151"/>
</dbReference>
<dbReference type="PDB" id="5YPQ">
    <property type="method" value="X-ray"/>
    <property type="resolution" value="2.65 A"/>
    <property type="chains" value="A/B/C/D/E/F/G/H/I/J/K/L=1-151"/>
</dbReference>
<dbReference type="PDBsum" id="4RC9"/>
<dbReference type="PDBsum" id="4RHC"/>
<dbReference type="PDBsum" id="4ZC1"/>
<dbReference type="PDBsum" id="5B6P"/>
<dbReference type="PDBsum" id="5WRF"/>
<dbReference type="PDBsum" id="5X47"/>
<dbReference type="PDBsum" id="5YDB"/>
<dbReference type="PDBsum" id="5YHM"/>
<dbReference type="PDBsum" id="5YL5"/>
<dbReference type="PDBsum" id="5YPQ"/>
<dbReference type="SMR" id="A3M692"/>
<dbReference type="KEGG" id="acb:A1S_2009"/>
<dbReference type="HOGENOM" id="CLU_090968_1_0_6"/>
<dbReference type="BRENDA" id="4.2.1.10">
    <property type="organism ID" value="98"/>
</dbReference>
<dbReference type="UniPathway" id="UPA00053">
    <property type="reaction ID" value="UER00086"/>
</dbReference>
<dbReference type="EvolutionaryTrace" id="A3M692"/>
<dbReference type="GO" id="GO:0003855">
    <property type="term" value="F:3-dehydroquinate dehydratase activity"/>
    <property type="evidence" value="ECO:0007669"/>
    <property type="project" value="UniProtKB-UniRule"/>
</dbReference>
<dbReference type="GO" id="GO:0008652">
    <property type="term" value="P:amino acid biosynthetic process"/>
    <property type="evidence" value="ECO:0007669"/>
    <property type="project" value="UniProtKB-KW"/>
</dbReference>
<dbReference type="GO" id="GO:0009073">
    <property type="term" value="P:aromatic amino acid family biosynthetic process"/>
    <property type="evidence" value="ECO:0007669"/>
    <property type="project" value="UniProtKB-KW"/>
</dbReference>
<dbReference type="GO" id="GO:0009423">
    <property type="term" value="P:chorismate biosynthetic process"/>
    <property type="evidence" value="ECO:0007669"/>
    <property type="project" value="UniProtKB-UniRule"/>
</dbReference>
<dbReference type="GO" id="GO:0019631">
    <property type="term" value="P:quinate catabolic process"/>
    <property type="evidence" value="ECO:0007669"/>
    <property type="project" value="TreeGrafter"/>
</dbReference>
<dbReference type="CDD" id="cd00466">
    <property type="entry name" value="DHQase_II"/>
    <property type="match status" value="1"/>
</dbReference>
<dbReference type="Gene3D" id="3.40.50.9100">
    <property type="entry name" value="Dehydroquinase, class II"/>
    <property type="match status" value="1"/>
</dbReference>
<dbReference type="HAMAP" id="MF_00169">
    <property type="entry name" value="AroQ"/>
    <property type="match status" value="1"/>
</dbReference>
<dbReference type="InterPro" id="IPR001874">
    <property type="entry name" value="DHquinase_II"/>
</dbReference>
<dbReference type="InterPro" id="IPR018509">
    <property type="entry name" value="DHquinase_II_CS"/>
</dbReference>
<dbReference type="InterPro" id="IPR036441">
    <property type="entry name" value="DHquinase_II_sf"/>
</dbReference>
<dbReference type="NCBIfam" id="TIGR01088">
    <property type="entry name" value="aroQ"/>
    <property type="match status" value="1"/>
</dbReference>
<dbReference type="NCBIfam" id="NF003804">
    <property type="entry name" value="PRK05395.1-1"/>
    <property type="match status" value="1"/>
</dbReference>
<dbReference type="NCBIfam" id="NF003805">
    <property type="entry name" value="PRK05395.1-2"/>
    <property type="match status" value="1"/>
</dbReference>
<dbReference type="NCBIfam" id="NF003806">
    <property type="entry name" value="PRK05395.1-3"/>
    <property type="match status" value="1"/>
</dbReference>
<dbReference type="NCBIfam" id="NF003807">
    <property type="entry name" value="PRK05395.1-4"/>
    <property type="match status" value="1"/>
</dbReference>
<dbReference type="PANTHER" id="PTHR21272">
    <property type="entry name" value="CATABOLIC 3-DEHYDROQUINASE"/>
    <property type="match status" value="1"/>
</dbReference>
<dbReference type="PANTHER" id="PTHR21272:SF3">
    <property type="entry name" value="CATABOLIC 3-DEHYDROQUINASE"/>
    <property type="match status" value="1"/>
</dbReference>
<dbReference type="Pfam" id="PF01220">
    <property type="entry name" value="DHquinase_II"/>
    <property type="match status" value="1"/>
</dbReference>
<dbReference type="PIRSF" id="PIRSF001399">
    <property type="entry name" value="DHquinase_II"/>
    <property type="match status" value="1"/>
</dbReference>
<dbReference type="SUPFAM" id="SSF52304">
    <property type="entry name" value="Type II 3-dehydroquinate dehydratase"/>
    <property type="match status" value="1"/>
</dbReference>
<dbReference type="PROSITE" id="PS01029">
    <property type="entry name" value="DEHYDROQUINASE_II"/>
    <property type="match status" value="1"/>
</dbReference>
<reference key="1">
    <citation type="journal article" date="2007" name="Genes Dev.">
        <title>New insights into Acinetobacter baumannii pathogenesis revealed by high-density pyrosequencing and transposon mutagenesis.</title>
        <authorList>
            <person name="Smith M.G."/>
            <person name="Gianoulis T.A."/>
            <person name="Pukatzki S."/>
            <person name="Mekalanos J.J."/>
            <person name="Ornston L.N."/>
            <person name="Gerstein M."/>
            <person name="Snyder M."/>
        </authorList>
    </citation>
    <scope>NUCLEOTIDE SEQUENCE [LARGE SCALE GENOMIC DNA]</scope>
    <source>
        <strain>ATCC 17978 / DSM 105126 / CIP 53.77 / LMG 1025 / NCDC KC755 / 5377</strain>
    </source>
</reference>
<name>AROQ_ACIBT</name>
<accession>A3M692</accession>
<proteinExistence type="evidence at protein level"/>
<feature type="chain" id="PRO_1000097587" description="3-dehydroquinate dehydratase">
    <location>
        <begin position="1"/>
        <end position="151"/>
    </location>
</feature>
<feature type="active site" description="Proton acceptor" evidence="1">
    <location>
        <position position="24"/>
    </location>
</feature>
<feature type="active site" description="Proton donor" evidence="1">
    <location>
        <position position="102"/>
    </location>
</feature>
<feature type="binding site" evidence="1">
    <location>
        <position position="76"/>
    </location>
    <ligand>
        <name>substrate</name>
    </ligand>
</feature>
<feature type="binding site" evidence="1">
    <location>
        <position position="82"/>
    </location>
    <ligand>
        <name>substrate</name>
    </ligand>
</feature>
<feature type="binding site" evidence="1">
    <location>
        <position position="89"/>
    </location>
    <ligand>
        <name>substrate</name>
    </ligand>
</feature>
<feature type="binding site" evidence="1">
    <location>
        <begin position="103"/>
        <end position="104"/>
    </location>
    <ligand>
        <name>substrate</name>
    </ligand>
</feature>
<feature type="binding site" evidence="1">
    <location>
        <position position="113"/>
    </location>
    <ligand>
        <name>substrate</name>
    </ligand>
</feature>
<feature type="site" description="Transition state stabilizer" evidence="1">
    <location>
        <position position="19"/>
    </location>
</feature>
<feature type="strand" evidence="2">
    <location>
        <begin position="5"/>
        <end position="9"/>
    </location>
</feature>
<feature type="helix" evidence="2">
    <location>
        <begin position="13"/>
        <end position="15"/>
    </location>
</feature>
<feature type="turn" evidence="2">
    <location>
        <begin position="16"/>
        <end position="18"/>
    </location>
</feature>
<feature type="strand" evidence="2">
    <location>
        <begin position="22"/>
        <end position="24"/>
    </location>
</feature>
<feature type="helix" evidence="2">
    <location>
        <begin position="29"/>
        <end position="42"/>
    </location>
</feature>
<feature type="strand" evidence="2">
    <location>
        <begin position="47"/>
        <end position="51"/>
    </location>
</feature>
<feature type="helix" evidence="2">
    <location>
        <begin position="55"/>
        <end position="67"/>
    </location>
</feature>
<feature type="strand" evidence="2">
    <location>
        <begin position="72"/>
        <end position="76"/>
    </location>
</feature>
<feature type="helix" evidence="2">
    <location>
        <begin position="78"/>
        <end position="82"/>
    </location>
</feature>
<feature type="helix" evidence="2">
    <location>
        <begin position="85"/>
        <end position="94"/>
    </location>
</feature>
<feature type="strand" evidence="2">
    <location>
        <begin position="98"/>
        <end position="104"/>
    </location>
</feature>
<feature type="helix" evidence="2">
    <location>
        <begin position="106"/>
        <end position="108"/>
    </location>
</feature>
<feature type="helix" evidence="2">
    <location>
        <begin position="111"/>
        <end position="114"/>
    </location>
</feature>
<feature type="helix" evidence="2">
    <location>
        <begin position="119"/>
        <end position="121"/>
    </location>
</feature>
<feature type="strand" evidence="2">
    <location>
        <begin position="122"/>
        <end position="129"/>
    </location>
</feature>
<feature type="helix" evidence="2">
    <location>
        <begin position="132"/>
        <end position="145"/>
    </location>
</feature>
<organism>
    <name type="scientific">Acinetobacter baumannii (strain ATCC 17978 / DSM 105126 / CIP 53.77 / LMG 1025 / NCDC KC755 / 5377)</name>
    <dbReference type="NCBI Taxonomy" id="400667"/>
    <lineage>
        <taxon>Bacteria</taxon>
        <taxon>Pseudomonadati</taxon>
        <taxon>Pseudomonadota</taxon>
        <taxon>Gammaproteobacteria</taxon>
        <taxon>Moraxellales</taxon>
        <taxon>Moraxellaceae</taxon>
        <taxon>Acinetobacter</taxon>
        <taxon>Acinetobacter calcoaceticus/baumannii complex</taxon>
    </lineage>
</organism>
<protein>
    <recommendedName>
        <fullName evidence="1">3-dehydroquinate dehydratase</fullName>
        <shortName evidence="1">3-dehydroquinase</shortName>
        <ecNumber evidence="1">4.2.1.10</ecNumber>
    </recommendedName>
    <alternativeName>
        <fullName evidence="1">Type II DHQase</fullName>
    </alternativeName>
</protein>
<comment type="function">
    <text evidence="1">Catalyzes a trans-dehydration via an enolate intermediate.</text>
</comment>
<comment type="catalytic activity">
    <reaction evidence="1">
        <text>3-dehydroquinate = 3-dehydroshikimate + H2O</text>
        <dbReference type="Rhea" id="RHEA:21096"/>
        <dbReference type="ChEBI" id="CHEBI:15377"/>
        <dbReference type="ChEBI" id="CHEBI:16630"/>
        <dbReference type="ChEBI" id="CHEBI:32364"/>
        <dbReference type="EC" id="4.2.1.10"/>
    </reaction>
</comment>
<comment type="pathway">
    <text evidence="1">Metabolic intermediate biosynthesis; chorismate biosynthesis; chorismate from D-erythrose 4-phosphate and phosphoenolpyruvate: step 3/7.</text>
</comment>
<comment type="subunit">
    <text evidence="1">Homododecamer.</text>
</comment>
<comment type="similarity">
    <text evidence="1">Belongs to the type-II 3-dehydroquinase family.</text>
</comment>
<evidence type="ECO:0000255" key="1">
    <source>
        <dbReference type="HAMAP-Rule" id="MF_00169"/>
    </source>
</evidence>
<evidence type="ECO:0007829" key="2">
    <source>
        <dbReference type="PDB" id="5YDB"/>
    </source>
</evidence>
<sequence>MSSTILVIHGPNLNLLGKREPEVYGHLTLDNINRQLIAQAEQASITLDTFQSNWEGAIVDRIHQAQTEGVKLIIINPAALTHTSVALRDALLGVAIPFIEVHLSNVHAREAFRHHSYLSDKAIGVICGLGAKGYSFALDYAIEKIQPSNPN</sequence>
<keyword id="KW-0002">3D-structure</keyword>
<keyword id="KW-0028">Amino-acid biosynthesis</keyword>
<keyword id="KW-0057">Aromatic amino acid biosynthesis</keyword>
<keyword id="KW-0456">Lyase</keyword>